<organism>
    <name type="scientific">Borrelia duttonii (strain Ly)</name>
    <dbReference type="NCBI Taxonomy" id="412419"/>
    <lineage>
        <taxon>Bacteria</taxon>
        <taxon>Pseudomonadati</taxon>
        <taxon>Spirochaetota</taxon>
        <taxon>Spirochaetia</taxon>
        <taxon>Spirochaetales</taxon>
        <taxon>Borreliaceae</taxon>
        <taxon>Borrelia</taxon>
    </lineage>
</organism>
<name>RNZ_BORDL</name>
<proteinExistence type="inferred from homology"/>
<keyword id="KW-0255">Endonuclease</keyword>
<keyword id="KW-0378">Hydrolase</keyword>
<keyword id="KW-0479">Metal-binding</keyword>
<keyword id="KW-0540">Nuclease</keyword>
<keyword id="KW-0819">tRNA processing</keyword>
<keyword id="KW-0862">Zinc</keyword>
<feature type="chain" id="PRO_1000187938" description="Ribonuclease Z">
    <location>
        <begin position="1"/>
        <end position="319"/>
    </location>
</feature>
<feature type="active site" description="Proton acceptor" evidence="1">
    <location>
        <position position="66"/>
    </location>
</feature>
<feature type="binding site" evidence="1">
    <location>
        <position position="62"/>
    </location>
    <ligand>
        <name>Zn(2+)</name>
        <dbReference type="ChEBI" id="CHEBI:29105"/>
        <label>1</label>
        <note>catalytic</note>
    </ligand>
</feature>
<feature type="binding site" evidence="1">
    <location>
        <position position="64"/>
    </location>
    <ligand>
        <name>Zn(2+)</name>
        <dbReference type="ChEBI" id="CHEBI:29105"/>
        <label>1</label>
        <note>catalytic</note>
    </ligand>
</feature>
<feature type="binding site" evidence="1">
    <location>
        <position position="66"/>
    </location>
    <ligand>
        <name>Zn(2+)</name>
        <dbReference type="ChEBI" id="CHEBI:29105"/>
        <label>2</label>
        <note>catalytic</note>
    </ligand>
</feature>
<feature type="binding site" evidence="1">
    <location>
        <position position="67"/>
    </location>
    <ligand>
        <name>Zn(2+)</name>
        <dbReference type="ChEBI" id="CHEBI:29105"/>
        <label>2</label>
        <note>catalytic</note>
    </ligand>
</feature>
<feature type="binding site" evidence="1">
    <location>
        <position position="145"/>
    </location>
    <ligand>
        <name>Zn(2+)</name>
        <dbReference type="ChEBI" id="CHEBI:29105"/>
        <label>1</label>
        <note>catalytic</note>
    </ligand>
</feature>
<feature type="binding site" evidence="1">
    <location>
        <position position="215"/>
    </location>
    <ligand>
        <name>Zn(2+)</name>
        <dbReference type="ChEBI" id="CHEBI:29105"/>
        <label>1</label>
        <note>catalytic</note>
    </ligand>
</feature>
<feature type="binding site" evidence="1">
    <location>
        <position position="215"/>
    </location>
    <ligand>
        <name>Zn(2+)</name>
        <dbReference type="ChEBI" id="CHEBI:29105"/>
        <label>2</label>
        <note>catalytic</note>
    </ligand>
</feature>
<feature type="binding site" evidence="1">
    <location>
        <position position="273"/>
    </location>
    <ligand>
        <name>Zn(2+)</name>
        <dbReference type="ChEBI" id="CHEBI:29105"/>
        <label>2</label>
        <note>catalytic</note>
    </ligand>
</feature>
<dbReference type="EC" id="3.1.26.11" evidence="1"/>
<dbReference type="EMBL" id="CP000976">
    <property type="protein sequence ID" value="ACH93683.1"/>
    <property type="molecule type" value="Genomic_DNA"/>
</dbReference>
<dbReference type="RefSeq" id="WP_012538492.1">
    <property type="nucleotide sequence ID" value="NC_011229.1"/>
</dbReference>
<dbReference type="SMR" id="B5RMU7"/>
<dbReference type="STRING" id="412419.BDU_759"/>
<dbReference type="KEGG" id="bdu:BDU_759"/>
<dbReference type="eggNOG" id="COG1234">
    <property type="taxonomic scope" value="Bacteria"/>
</dbReference>
<dbReference type="HOGENOM" id="CLU_031317_2_1_12"/>
<dbReference type="OrthoDB" id="9800940at2"/>
<dbReference type="Proteomes" id="UP000000611">
    <property type="component" value="Chromosome"/>
</dbReference>
<dbReference type="GO" id="GO:0042781">
    <property type="term" value="F:3'-tRNA processing endoribonuclease activity"/>
    <property type="evidence" value="ECO:0007669"/>
    <property type="project" value="UniProtKB-UniRule"/>
</dbReference>
<dbReference type="GO" id="GO:0008270">
    <property type="term" value="F:zinc ion binding"/>
    <property type="evidence" value="ECO:0007669"/>
    <property type="project" value="UniProtKB-UniRule"/>
</dbReference>
<dbReference type="CDD" id="cd07717">
    <property type="entry name" value="RNaseZ_ZiPD-like_MBL-fold"/>
    <property type="match status" value="1"/>
</dbReference>
<dbReference type="Gene3D" id="3.60.15.10">
    <property type="entry name" value="Ribonuclease Z/Hydroxyacylglutathione hydrolase-like"/>
    <property type="match status" value="1"/>
</dbReference>
<dbReference type="HAMAP" id="MF_01818">
    <property type="entry name" value="RNase_Z_BN"/>
    <property type="match status" value="1"/>
</dbReference>
<dbReference type="InterPro" id="IPR001279">
    <property type="entry name" value="Metallo-B-lactamas"/>
</dbReference>
<dbReference type="InterPro" id="IPR036866">
    <property type="entry name" value="RibonucZ/Hydroxyglut_hydro"/>
</dbReference>
<dbReference type="InterPro" id="IPR013471">
    <property type="entry name" value="RNase_Z/BN"/>
</dbReference>
<dbReference type="NCBIfam" id="NF000801">
    <property type="entry name" value="PRK00055.1-3"/>
    <property type="match status" value="1"/>
</dbReference>
<dbReference type="NCBIfam" id="TIGR02651">
    <property type="entry name" value="RNase_Z"/>
    <property type="match status" value="1"/>
</dbReference>
<dbReference type="PANTHER" id="PTHR46018">
    <property type="entry name" value="ZINC PHOSPHODIESTERASE ELAC PROTEIN 1"/>
    <property type="match status" value="1"/>
</dbReference>
<dbReference type="PANTHER" id="PTHR46018:SF2">
    <property type="entry name" value="ZINC PHOSPHODIESTERASE ELAC PROTEIN 1"/>
    <property type="match status" value="1"/>
</dbReference>
<dbReference type="Pfam" id="PF00753">
    <property type="entry name" value="Lactamase_B"/>
    <property type="match status" value="1"/>
</dbReference>
<dbReference type="Pfam" id="PF12706">
    <property type="entry name" value="Lactamase_B_2"/>
    <property type="match status" value="1"/>
</dbReference>
<dbReference type="SUPFAM" id="SSF56281">
    <property type="entry name" value="Metallo-hydrolase/oxidoreductase"/>
    <property type="match status" value="1"/>
</dbReference>
<accession>B5RMU7</accession>
<reference key="1">
    <citation type="journal article" date="2008" name="PLoS Genet.">
        <title>The genome of Borrelia recurrentis, the agent of deadly louse-borne relapsing fever, is a degraded subset of tick-borne Borrelia duttonii.</title>
        <authorList>
            <person name="Lescot M."/>
            <person name="Audic S."/>
            <person name="Robert C."/>
            <person name="Nguyen T.T."/>
            <person name="Blanc G."/>
            <person name="Cutler S.J."/>
            <person name="Wincker P."/>
            <person name="Couloux A."/>
            <person name="Claverie J.-M."/>
            <person name="Raoult D."/>
            <person name="Drancourt M."/>
        </authorList>
    </citation>
    <scope>NUCLEOTIDE SEQUENCE [LARGE SCALE GENOMIC DNA]</scope>
    <source>
        <strain>Ly</strain>
    </source>
</reference>
<evidence type="ECO:0000255" key="1">
    <source>
        <dbReference type="HAMAP-Rule" id="MF_01818"/>
    </source>
</evidence>
<gene>
    <name evidence="1" type="primary">rnz</name>
    <name type="ordered locus">BDU_759</name>
</gene>
<sequence>MNFNINILGTGGTRPLHNRYLTSVLIEYHGESILFDCGEATQMSLRKQKISWQKIKMICITHLHADHITGLLGIVMLMAQSGDTRKEPLTIIGPIGIKKYLETNIELLRVHKNYQIIYKEIIINKTEPVLYEDKRKRIEYIKLKHSIDCIGYLFIEKDKPGKFDIQKAESLNIPKGPIRKKLQEGYEVMLNGRKIVPSEILGETKKGLKFAYITDTAYFEELSTYIQNFNLVIIESTFKDDLKEEAKKKLHLTAKLAAQITKKAKVYQTGLIHFSERYTLNKDLYELLNEAQQEYPNGNIFLAKDGMKLKANKDKFIIK</sequence>
<comment type="function">
    <text evidence="1">Zinc phosphodiesterase, which displays some tRNA 3'-processing endonuclease activity. Probably involved in tRNA maturation, by removing a 3'-trailer from precursor tRNA.</text>
</comment>
<comment type="catalytic activity">
    <reaction evidence="1">
        <text>Endonucleolytic cleavage of RNA, removing extra 3' nucleotides from tRNA precursor, generating 3' termini of tRNAs. A 3'-hydroxy group is left at the tRNA terminus and a 5'-phosphoryl group is left at the trailer molecule.</text>
        <dbReference type="EC" id="3.1.26.11"/>
    </reaction>
</comment>
<comment type="cofactor">
    <cofactor evidence="1">
        <name>Zn(2+)</name>
        <dbReference type="ChEBI" id="CHEBI:29105"/>
    </cofactor>
    <text evidence="1">Binds 2 Zn(2+) ions.</text>
</comment>
<comment type="subunit">
    <text evidence="1">Homodimer.</text>
</comment>
<comment type="similarity">
    <text evidence="1">Belongs to the RNase Z family.</text>
</comment>
<protein>
    <recommendedName>
        <fullName evidence="1">Ribonuclease Z</fullName>
        <shortName evidence="1">RNase Z</shortName>
        <ecNumber evidence="1">3.1.26.11</ecNumber>
    </recommendedName>
    <alternativeName>
        <fullName evidence="1">tRNA 3 endonuclease</fullName>
    </alternativeName>
    <alternativeName>
        <fullName evidence="1">tRNase Z</fullName>
    </alternativeName>
</protein>